<evidence type="ECO:0000255" key="1">
    <source>
        <dbReference type="HAMAP-Rule" id="MF_01864"/>
    </source>
</evidence>
<evidence type="ECO:0000255" key="2">
    <source>
        <dbReference type="PROSITE-ProRule" id="PRU01266"/>
    </source>
</evidence>
<evidence type="ECO:0000256" key="3">
    <source>
        <dbReference type="SAM" id="MobiDB-lite"/>
    </source>
</evidence>
<accession>B2FJ92</accession>
<gene>
    <name evidence="1" type="primary">miaB</name>
    <name type="ordered locus">Smlt1600</name>
</gene>
<organism>
    <name type="scientific">Stenotrophomonas maltophilia (strain K279a)</name>
    <dbReference type="NCBI Taxonomy" id="522373"/>
    <lineage>
        <taxon>Bacteria</taxon>
        <taxon>Pseudomonadati</taxon>
        <taxon>Pseudomonadota</taxon>
        <taxon>Gammaproteobacteria</taxon>
        <taxon>Lysobacterales</taxon>
        <taxon>Lysobacteraceae</taxon>
        <taxon>Stenotrophomonas</taxon>
        <taxon>Stenotrophomonas maltophilia group</taxon>
    </lineage>
</organism>
<comment type="function">
    <text evidence="1">Catalyzes the methylthiolation of N6-(dimethylallyl)adenosine (i(6)A), leading to the formation of 2-methylthio-N6-(dimethylallyl)adenosine (ms(2)i(6)A) at position 37 in tRNAs that read codons beginning with uridine.</text>
</comment>
<comment type="catalytic activity">
    <reaction evidence="1">
        <text>N(6)-dimethylallyladenosine(37) in tRNA + (sulfur carrier)-SH + AH2 + 2 S-adenosyl-L-methionine = 2-methylsulfanyl-N(6)-dimethylallyladenosine(37) in tRNA + (sulfur carrier)-H + 5'-deoxyadenosine + L-methionine + A + S-adenosyl-L-homocysteine + 2 H(+)</text>
        <dbReference type="Rhea" id="RHEA:37067"/>
        <dbReference type="Rhea" id="RHEA-COMP:10375"/>
        <dbReference type="Rhea" id="RHEA-COMP:10376"/>
        <dbReference type="Rhea" id="RHEA-COMP:14737"/>
        <dbReference type="Rhea" id="RHEA-COMP:14739"/>
        <dbReference type="ChEBI" id="CHEBI:13193"/>
        <dbReference type="ChEBI" id="CHEBI:15378"/>
        <dbReference type="ChEBI" id="CHEBI:17319"/>
        <dbReference type="ChEBI" id="CHEBI:17499"/>
        <dbReference type="ChEBI" id="CHEBI:29917"/>
        <dbReference type="ChEBI" id="CHEBI:57844"/>
        <dbReference type="ChEBI" id="CHEBI:57856"/>
        <dbReference type="ChEBI" id="CHEBI:59789"/>
        <dbReference type="ChEBI" id="CHEBI:64428"/>
        <dbReference type="ChEBI" id="CHEBI:74415"/>
        <dbReference type="ChEBI" id="CHEBI:74417"/>
        <dbReference type="EC" id="2.8.4.3"/>
    </reaction>
</comment>
<comment type="cofactor">
    <cofactor evidence="1">
        <name>[4Fe-4S] cluster</name>
        <dbReference type="ChEBI" id="CHEBI:49883"/>
    </cofactor>
    <text evidence="1">Binds 2 [4Fe-4S] clusters. One cluster is coordinated with 3 cysteines and an exchangeable S-adenosyl-L-methionine.</text>
</comment>
<comment type="subunit">
    <text evidence="1">Monomer.</text>
</comment>
<comment type="subcellular location">
    <subcellularLocation>
        <location evidence="1">Cytoplasm</location>
    </subcellularLocation>
</comment>
<comment type="similarity">
    <text evidence="1">Belongs to the methylthiotransferase family. MiaB subfamily.</text>
</comment>
<dbReference type="EC" id="2.8.4.3" evidence="1"/>
<dbReference type="EMBL" id="AM743169">
    <property type="protein sequence ID" value="CAQ45131.1"/>
    <property type="molecule type" value="Genomic_DNA"/>
</dbReference>
<dbReference type="RefSeq" id="WP_012479666.1">
    <property type="nucleotide sequence ID" value="NC_010943.1"/>
</dbReference>
<dbReference type="SMR" id="B2FJ92"/>
<dbReference type="EnsemblBacteria" id="CAQ45131">
    <property type="protein sequence ID" value="CAQ45131"/>
    <property type="gene ID" value="Smlt1600"/>
</dbReference>
<dbReference type="GeneID" id="93832777"/>
<dbReference type="KEGG" id="sml:Smlt1600"/>
<dbReference type="PATRIC" id="fig|522373.3.peg.1534"/>
<dbReference type="eggNOG" id="COG0621">
    <property type="taxonomic scope" value="Bacteria"/>
</dbReference>
<dbReference type="HOGENOM" id="CLU_018697_2_0_6"/>
<dbReference type="Proteomes" id="UP000008840">
    <property type="component" value="Chromosome"/>
</dbReference>
<dbReference type="GO" id="GO:0005829">
    <property type="term" value="C:cytosol"/>
    <property type="evidence" value="ECO:0007669"/>
    <property type="project" value="TreeGrafter"/>
</dbReference>
<dbReference type="GO" id="GO:0051539">
    <property type="term" value="F:4 iron, 4 sulfur cluster binding"/>
    <property type="evidence" value="ECO:0007669"/>
    <property type="project" value="UniProtKB-UniRule"/>
</dbReference>
<dbReference type="GO" id="GO:0046872">
    <property type="term" value="F:metal ion binding"/>
    <property type="evidence" value="ECO:0007669"/>
    <property type="project" value="UniProtKB-KW"/>
</dbReference>
<dbReference type="GO" id="GO:0035597">
    <property type="term" value="F:N6-isopentenyladenosine methylthiotransferase activity"/>
    <property type="evidence" value="ECO:0007669"/>
    <property type="project" value="TreeGrafter"/>
</dbReference>
<dbReference type="CDD" id="cd01335">
    <property type="entry name" value="Radical_SAM"/>
    <property type="match status" value="1"/>
</dbReference>
<dbReference type="FunFam" id="3.40.50.12160:FF:000001">
    <property type="entry name" value="tRNA-2-methylthio-N(6)-dimethylallyladenosine synthase"/>
    <property type="match status" value="1"/>
</dbReference>
<dbReference type="FunFam" id="3.80.30.20:FF:000001">
    <property type="entry name" value="tRNA-2-methylthio-N(6)-dimethylallyladenosine synthase 2"/>
    <property type="match status" value="1"/>
</dbReference>
<dbReference type="Gene3D" id="3.40.50.12160">
    <property type="entry name" value="Methylthiotransferase, N-terminal domain"/>
    <property type="match status" value="1"/>
</dbReference>
<dbReference type="Gene3D" id="3.80.30.20">
    <property type="entry name" value="tm_1862 like domain"/>
    <property type="match status" value="1"/>
</dbReference>
<dbReference type="HAMAP" id="MF_01864">
    <property type="entry name" value="tRNA_metthiotr_MiaB"/>
    <property type="match status" value="1"/>
</dbReference>
<dbReference type="InterPro" id="IPR006638">
    <property type="entry name" value="Elp3/MiaA/NifB-like_rSAM"/>
</dbReference>
<dbReference type="InterPro" id="IPR005839">
    <property type="entry name" value="Methylthiotransferase"/>
</dbReference>
<dbReference type="InterPro" id="IPR020612">
    <property type="entry name" value="Methylthiotransferase_CS"/>
</dbReference>
<dbReference type="InterPro" id="IPR013848">
    <property type="entry name" value="Methylthiotransferase_N"/>
</dbReference>
<dbReference type="InterPro" id="IPR038135">
    <property type="entry name" value="Methylthiotransferase_N_sf"/>
</dbReference>
<dbReference type="InterPro" id="IPR006463">
    <property type="entry name" value="MiaB_methiolase"/>
</dbReference>
<dbReference type="InterPro" id="IPR007197">
    <property type="entry name" value="rSAM"/>
</dbReference>
<dbReference type="InterPro" id="IPR023404">
    <property type="entry name" value="rSAM_horseshoe"/>
</dbReference>
<dbReference type="InterPro" id="IPR002792">
    <property type="entry name" value="TRAM_dom"/>
</dbReference>
<dbReference type="NCBIfam" id="TIGR01574">
    <property type="entry name" value="miaB-methiolase"/>
    <property type="match status" value="1"/>
</dbReference>
<dbReference type="NCBIfam" id="TIGR00089">
    <property type="entry name" value="MiaB/RimO family radical SAM methylthiotransferase"/>
    <property type="match status" value="1"/>
</dbReference>
<dbReference type="PANTHER" id="PTHR43020">
    <property type="entry name" value="CDK5 REGULATORY SUBUNIT-ASSOCIATED PROTEIN 1"/>
    <property type="match status" value="1"/>
</dbReference>
<dbReference type="PANTHER" id="PTHR43020:SF2">
    <property type="entry name" value="MITOCHONDRIAL TRNA METHYLTHIOTRANSFERASE CDK5RAP1"/>
    <property type="match status" value="1"/>
</dbReference>
<dbReference type="Pfam" id="PF04055">
    <property type="entry name" value="Radical_SAM"/>
    <property type="match status" value="1"/>
</dbReference>
<dbReference type="Pfam" id="PF01938">
    <property type="entry name" value="TRAM"/>
    <property type="match status" value="1"/>
</dbReference>
<dbReference type="Pfam" id="PF00919">
    <property type="entry name" value="UPF0004"/>
    <property type="match status" value="1"/>
</dbReference>
<dbReference type="SFLD" id="SFLDF00273">
    <property type="entry name" value="(dimethylallyl)adenosine_tRNA"/>
    <property type="match status" value="1"/>
</dbReference>
<dbReference type="SFLD" id="SFLDG01082">
    <property type="entry name" value="B12-binding_domain_containing"/>
    <property type="match status" value="1"/>
</dbReference>
<dbReference type="SFLD" id="SFLDS00029">
    <property type="entry name" value="Radical_SAM"/>
    <property type="match status" value="1"/>
</dbReference>
<dbReference type="SMART" id="SM00729">
    <property type="entry name" value="Elp3"/>
    <property type="match status" value="1"/>
</dbReference>
<dbReference type="SUPFAM" id="SSF102114">
    <property type="entry name" value="Radical SAM enzymes"/>
    <property type="match status" value="1"/>
</dbReference>
<dbReference type="PROSITE" id="PS51449">
    <property type="entry name" value="MTTASE_N"/>
    <property type="match status" value="1"/>
</dbReference>
<dbReference type="PROSITE" id="PS01278">
    <property type="entry name" value="MTTASE_RADICAL"/>
    <property type="match status" value="1"/>
</dbReference>
<dbReference type="PROSITE" id="PS51918">
    <property type="entry name" value="RADICAL_SAM"/>
    <property type="match status" value="1"/>
</dbReference>
<dbReference type="PROSITE" id="PS50926">
    <property type="entry name" value="TRAM"/>
    <property type="match status" value="1"/>
</dbReference>
<proteinExistence type="inferred from homology"/>
<keyword id="KW-0004">4Fe-4S</keyword>
<keyword id="KW-0963">Cytoplasm</keyword>
<keyword id="KW-0408">Iron</keyword>
<keyword id="KW-0411">Iron-sulfur</keyword>
<keyword id="KW-0479">Metal-binding</keyword>
<keyword id="KW-1185">Reference proteome</keyword>
<keyword id="KW-0949">S-adenosyl-L-methionine</keyword>
<keyword id="KW-0808">Transferase</keyword>
<keyword id="KW-0819">tRNA processing</keyword>
<sequence length="472" mass="51695">MTGTPDVFPPATPGGAPLVALPAGPRKPDQVKGKLYIKTHGCQMNEYDSAKMADVLAASDGLELTDTPEDADVILVNTCSIREKAQEKVFSQLGVWKGLKNKGREVIIGVGGCVASQEGEAIIKRAPFVDLVFGPQTLHRLPELIRARREQKRPQVDISFPEIEKFDRLPEPRAEGASAFVSIMEGCSKYCSFCVVPYTRGTEVSRPFEDVVVEVAQLAAQGVREINLLGQNVNAYRGPYGDGEFADLGLLIRTIAEIDGVGRIRFTTSHPLEFSDSLIDAFRDVPQLANFLHLPVQAGSDRVLSAMKRGYTALEFKSKIRKLRAVRPDISISSDFIVGFPGETDADFEKTMKLIEDIGFDHSFSFIYSRRPGTPAADLEDTISDAEKHARLSRLQERINAHAAGISEKMVGTVQTVLVEGPSRKNPNELTGKTENMRSVNFPAPARLIGQFVDVVITEALTNSLRARVVAE</sequence>
<reference key="1">
    <citation type="journal article" date="2008" name="Genome Biol.">
        <title>The complete genome, comparative and functional analysis of Stenotrophomonas maltophilia reveals an organism heavily shielded by drug resistance determinants.</title>
        <authorList>
            <person name="Crossman L.C."/>
            <person name="Gould V.C."/>
            <person name="Dow J.M."/>
            <person name="Vernikos G.S."/>
            <person name="Okazaki A."/>
            <person name="Sebaihia M."/>
            <person name="Saunders D."/>
            <person name="Arrowsmith C."/>
            <person name="Carver T."/>
            <person name="Peters N."/>
            <person name="Adlem E."/>
            <person name="Kerhornou A."/>
            <person name="Lord A."/>
            <person name="Murphy L."/>
            <person name="Seeger K."/>
            <person name="Squares R."/>
            <person name="Rutter S."/>
            <person name="Quail M.A."/>
            <person name="Rajandream M.A."/>
            <person name="Harris D."/>
            <person name="Churcher C."/>
            <person name="Bentley S.D."/>
            <person name="Parkhill J."/>
            <person name="Thomson N.R."/>
            <person name="Avison M.B."/>
        </authorList>
    </citation>
    <scope>NUCLEOTIDE SEQUENCE [LARGE SCALE GENOMIC DNA]</scope>
    <source>
        <strain>K279a</strain>
    </source>
</reference>
<name>MIAB_STRMK</name>
<protein>
    <recommendedName>
        <fullName evidence="1">tRNA-2-methylthio-N(6)-dimethylallyladenosine synthase</fullName>
        <ecNumber evidence="1">2.8.4.3</ecNumber>
    </recommendedName>
    <alternativeName>
        <fullName evidence="1">(Dimethylallyl)adenosine tRNA methylthiotransferase MiaB</fullName>
    </alternativeName>
    <alternativeName>
        <fullName evidence="1">tRNA-i(6)A37 methylthiotransferase</fullName>
    </alternativeName>
</protein>
<feature type="chain" id="PRO_0000374582" description="tRNA-2-methylthio-N(6)-dimethylallyladenosine synthase">
    <location>
        <begin position="1"/>
        <end position="472"/>
    </location>
</feature>
<feature type="domain" description="MTTase N-terminal" evidence="1">
    <location>
        <begin position="33"/>
        <end position="150"/>
    </location>
</feature>
<feature type="domain" description="Radical SAM core" evidence="2">
    <location>
        <begin position="173"/>
        <end position="407"/>
    </location>
</feature>
<feature type="domain" description="TRAM" evidence="1">
    <location>
        <begin position="408"/>
        <end position="471"/>
    </location>
</feature>
<feature type="region of interest" description="Disordered" evidence="3">
    <location>
        <begin position="1"/>
        <end position="24"/>
    </location>
</feature>
<feature type="binding site" evidence="1">
    <location>
        <position position="42"/>
    </location>
    <ligand>
        <name>[4Fe-4S] cluster</name>
        <dbReference type="ChEBI" id="CHEBI:49883"/>
        <label>1</label>
    </ligand>
</feature>
<feature type="binding site" evidence="1">
    <location>
        <position position="79"/>
    </location>
    <ligand>
        <name>[4Fe-4S] cluster</name>
        <dbReference type="ChEBI" id="CHEBI:49883"/>
        <label>1</label>
    </ligand>
</feature>
<feature type="binding site" evidence="1">
    <location>
        <position position="113"/>
    </location>
    <ligand>
        <name>[4Fe-4S] cluster</name>
        <dbReference type="ChEBI" id="CHEBI:49883"/>
        <label>1</label>
    </ligand>
</feature>
<feature type="binding site" evidence="1">
    <location>
        <position position="187"/>
    </location>
    <ligand>
        <name>[4Fe-4S] cluster</name>
        <dbReference type="ChEBI" id="CHEBI:49883"/>
        <label>2</label>
        <note>4Fe-4S-S-AdoMet</note>
    </ligand>
</feature>
<feature type="binding site" evidence="1">
    <location>
        <position position="191"/>
    </location>
    <ligand>
        <name>[4Fe-4S] cluster</name>
        <dbReference type="ChEBI" id="CHEBI:49883"/>
        <label>2</label>
        <note>4Fe-4S-S-AdoMet</note>
    </ligand>
</feature>
<feature type="binding site" evidence="1">
    <location>
        <position position="194"/>
    </location>
    <ligand>
        <name>[4Fe-4S] cluster</name>
        <dbReference type="ChEBI" id="CHEBI:49883"/>
        <label>2</label>
        <note>4Fe-4S-S-AdoMet</note>
    </ligand>
</feature>